<proteinExistence type="evidence at protein level"/>
<sequence length="210" mass="23468">MASSSALALRRLLSSSTVAVPRALRAVRPVAASSRLFNTNAARNYEDGVDRNHHSNRHVSRHGGDFFSHILDPFTPTRSLSQMLNFMDQVSEIPLVSATRGMGASGVRRGWNVKEKDDALHLRIDMPGLSREDVKLALEQNTLVIRGEGETEEGEDVSGDGRRFTSRIELPEKVYKTDEIKAEMKNGVLKVVIPKIKEDERNNIRHINVD</sequence>
<evidence type="ECO:0000255" key="1"/>
<evidence type="ECO:0000255" key="2">
    <source>
        <dbReference type="PROSITE-ProRule" id="PRU00285"/>
    </source>
</evidence>
<evidence type="ECO:0000305" key="3"/>
<organism>
    <name type="scientific">Arabidopsis thaliana</name>
    <name type="common">Mouse-ear cress</name>
    <dbReference type="NCBI Taxonomy" id="3702"/>
    <lineage>
        <taxon>Eukaryota</taxon>
        <taxon>Viridiplantae</taxon>
        <taxon>Streptophyta</taxon>
        <taxon>Embryophyta</taxon>
        <taxon>Tracheophyta</taxon>
        <taxon>Spermatophyta</taxon>
        <taxon>Magnoliopsida</taxon>
        <taxon>eudicotyledons</taxon>
        <taxon>Gunneridae</taxon>
        <taxon>Pentapetalae</taxon>
        <taxon>rosids</taxon>
        <taxon>malvids</taxon>
        <taxon>Brassicales</taxon>
        <taxon>Brassicaceae</taxon>
        <taxon>Camelineae</taxon>
        <taxon>Arabidopsis</taxon>
    </lineage>
</organism>
<protein>
    <recommendedName>
        <fullName>23.5 kDa heat shock protein, mitochondrial</fullName>
        <shortName>AtHsp23.5</shortName>
    </recommendedName>
</protein>
<keyword id="KW-0496">Mitochondrion</keyword>
<keyword id="KW-1185">Reference proteome</keyword>
<keyword id="KW-0346">Stress response</keyword>
<keyword id="KW-0809">Transit peptide</keyword>
<dbReference type="EMBL" id="AB025621">
    <property type="protein sequence ID" value="BAB09755.1"/>
    <property type="molecule type" value="Genomic_DNA"/>
</dbReference>
<dbReference type="EMBL" id="CP002688">
    <property type="protein sequence ID" value="AED96081.1"/>
    <property type="molecule type" value="Genomic_DNA"/>
</dbReference>
<dbReference type="EMBL" id="BT008572">
    <property type="protein sequence ID" value="AAP40399.1"/>
    <property type="molecule type" value="mRNA"/>
</dbReference>
<dbReference type="EMBL" id="BT008645">
    <property type="protein sequence ID" value="AAP40460.1"/>
    <property type="molecule type" value="mRNA"/>
</dbReference>
<dbReference type="EMBL" id="AK229697">
    <property type="protein sequence ID" value="BAF01537.1"/>
    <property type="molecule type" value="mRNA"/>
</dbReference>
<dbReference type="EMBL" id="AY086693">
    <property type="protein sequence ID" value="AAM63747.1"/>
    <property type="molecule type" value="mRNA"/>
</dbReference>
<dbReference type="RefSeq" id="NP_199957.1">
    <property type="nucleotide sequence ID" value="NM_124523.3"/>
</dbReference>
<dbReference type="SMR" id="Q9FGM9"/>
<dbReference type="BioGRID" id="20463">
    <property type="interactions" value="3"/>
</dbReference>
<dbReference type="FunCoup" id="Q9FGM9">
    <property type="interactions" value="38"/>
</dbReference>
<dbReference type="IntAct" id="Q9FGM9">
    <property type="interactions" value="3"/>
</dbReference>
<dbReference type="STRING" id="3702.Q9FGM9"/>
<dbReference type="PaxDb" id="3702-AT5G51440.1"/>
<dbReference type="ProteomicsDB" id="232117"/>
<dbReference type="EnsemblPlants" id="AT5G51440.1">
    <property type="protein sequence ID" value="AT5G51440.1"/>
    <property type="gene ID" value="AT5G51440"/>
</dbReference>
<dbReference type="GeneID" id="835218"/>
<dbReference type="Gramene" id="AT5G51440.1">
    <property type="protein sequence ID" value="AT5G51440.1"/>
    <property type="gene ID" value="AT5G51440"/>
</dbReference>
<dbReference type="KEGG" id="ath:AT5G51440"/>
<dbReference type="Araport" id="AT5G51440"/>
<dbReference type="TAIR" id="AT5G51440">
    <property type="gene designation" value="HSP23.5"/>
</dbReference>
<dbReference type="eggNOG" id="KOG0710">
    <property type="taxonomic scope" value="Eukaryota"/>
</dbReference>
<dbReference type="HOGENOM" id="CLU_046737_3_1_1"/>
<dbReference type="InParanoid" id="Q9FGM9"/>
<dbReference type="OMA" id="CAQFTEM"/>
<dbReference type="OrthoDB" id="1431247at2759"/>
<dbReference type="PhylomeDB" id="Q9FGM9"/>
<dbReference type="PRO" id="PR:Q9FGM9"/>
<dbReference type="Proteomes" id="UP000006548">
    <property type="component" value="Chromosome 5"/>
</dbReference>
<dbReference type="ExpressionAtlas" id="Q9FGM9">
    <property type="expression patterns" value="baseline and differential"/>
</dbReference>
<dbReference type="GO" id="GO:0005739">
    <property type="term" value="C:mitochondrion"/>
    <property type="evidence" value="ECO:0007669"/>
    <property type="project" value="UniProtKB-SubCell"/>
</dbReference>
<dbReference type="CDD" id="cd06464">
    <property type="entry name" value="ACD_sHsps-like"/>
    <property type="match status" value="1"/>
</dbReference>
<dbReference type="FunFam" id="2.60.40.790:FF:000047">
    <property type="entry name" value="23.6 kDa heat shock protein mitochondrial"/>
    <property type="match status" value="1"/>
</dbReference>
<dbReference type="Gene3D" id="2.60.40.790">
    <property type="match status" value="1"/>
</dbReference>
<dbReference type="InterPro" id="IPR002068">
    <property type="entry name" value="A-crystallin/Hsp20_dom"/>
</dbReference>
<dbReference type="InterPro" id="IPR044656">
    <property type="entry name" value="HSP14.7/HSP23.5/HSP23.6-like"/>
</dbReference>
<dbReference type="InterPro" id="IPR008978">
    <property type="entry name" value="HSP20-like_chaperone"/>
</dbReference>
<dbReference type="PANTHER" id="PTHR46991">
    <property type="entry name" value="23.5 KDA HEAT SHOCK PROTEIN, MITOCHONDRIAL"/>
    <property type="match status" value="1"/>
</dbReference>
<dbReference type="PANTHER" id="PTHR46991:SF33">
    <property type="entry name" value="23.5 KDA HEAT SHOCK PROTEIN, MITOCHONDRIAL"/>
    <property type="match status" value="1"/>
</dbReference>
<dbReference type="Pfam" id="PF00011">
    <property type="entry name" value="HSP20"/>
    <property type="match status" value="1"/>
</dbReference>
<dbReference type="SUPFAM" id="SSF49764">
    <property type="entry name" value="HSP20-like chaperones"/>
    <property type="match status" value="1"/>
</dbReference>
<dbReference type="PROSITE" id="PS01031">
    <property type="entry name" value="SHSP"/>
    <property type="match status" value="1"/>
</dbReference>
<gene>
    <name type="primary">HSP23.5</name>
    <name type="ordered locus">At5g51440</name>
    <name type="ORF">MFG13.15</name>
</gene>
<accession>Q9FGM9</accession>
<accession>Q8LCB4</accession>
<feature type="transit peptide" description="Mitochondrion" evidence="1">
    <location>
        <begin position="1"/>
        <end position="20"/>
    </location>
</feature>
<feature type="chain" id="PRO_0000387493" description="23.5 kDa heat shock protein, mitochondrial">
    <location>
        <begin position="21"/>
        <end position="210"/>
    </location>
</feature>
<feature type="domain" description="sHSP" evidence="2">
    <location>
        <begin position="102"/>
        <end position="210"/>
    </location>
</feature>
<feature type="sequence conflict" description="In Ref. 5; AAM63747." evidence="3" ref="5">
    <original>A</original>
    <variation>S</variation>
    <location>
        <position position="31"/>
    </location>
</feature>
<feature type="sequence conflict" description="In Ref. 5; AAM63747." evidence="3" ref="5">
    <original>H</original>
    <variation>D</variation>
    <location>
        <position position="69"/>
    </location>
</feature>
<reference key="1">
    <citation type="submission" date="1999-04" db="EMBL/GenBank/DDBJ databases">
        <title>Structural analysis of Arabidopsis thaliana chromosome 5. XI.</title>
        <authorList>
            <person name="Kaneko T."/>
            <person name="Katoh T."/>
            <person name="Asamizu E."/>
            <person name="Sato S."/>
            <person name="Nakamura Y."/>
            <person name="Kotani H."/>
            <person name="Tabata S."/>
        </authorList>
    </citation>
    <scope>NUCLEOTIDE SEQUENCE [LARGE SCALE GENOMIC DNA]</scope>
    <source>
        <strain>cv. Columbia</strain>
    </source>
</reference>
<reference key="2">
    <citation type="journal article" date="2017" name="Plant J.">
        <title>Araport11: a complete reannotation of the Arabidopsis thaliana reference genome.</title>
        <authorList>
            <person name="Cheng C.Y."/>
            <person name="Krishnakumar V."/>
            <person name="Chan A.P."/>
            <person name="Thibaud-Nissen F."/>
            <person name="Schobel S."/>
            <person name="Town C.D."/>
        </authorList>
    </citation>
    <scope>GENOME REANNOTATION</scope>
    <source>
        <strain>cv. Columbia</strain>
    </source>
</reference>
<reference key="3">
    <citation type="journal article" date="2003" name="Science">
        <title>Empirical analysis of transcriptional activity in the Arabidopsis genome.</title>
        <authorList>
            <person name="Yamada K."/>
            <person name="Lim J."/>
            <person name="Dale J.M."/>
            <person name="Chen H."/>
            <person name="Shinn P."/>
            <person name="Palm C.J."/>
            <person name="Southwick A.M."/>
            <person name="Wu H.C."/>
            <person name="Kim C.J."/>
            <person name="Nguyen M."/>
            <person name="Pham P.K."/>
            <person name="Cheuk R.F."/>
            <person name="Karlin-Newmann G."/>
            <person name="Liu S.X."/>
            <person name="Lam B."/>
            <person name="Sakano H."/>
            <person name="Wu T."/>
            <person name="Yu G."/>
            <person name="Miranda M."/>
            <person name="Quach H.L."/>
            <person name="Tripp M."/>
            <person name="Chang C.H."/>
            <person name="Lee J.M."/>
            <person name="Toriumi M.J."/>
            <person name="Chan M.M."/>
            <person name="Tang C.C."/>
            <person name="Onodera C.S."/>
            <person name="Deng J.M."/>
            <person name="Akiyama K."/>
            <person name="Ansari Y."/>
            <person name="Arakawa T."/>
            <person name="Banh J."/>
            <person name="Banno F."/>
            <person name="Bowser L."/>
            <person name="Brooks S.Y."/>
            <person name="Carninci P."/>
            <person name="Chao Q."/>
            <person name="Choy N."/>
            <person name="Enju A."/>
            <person name="Goldsmith A.D."/>
            <person name="Gurjal M."/>
            <person name="Hansen N.F."/>
            <person name="Hayashizaki Y."/>
            <person name="Johnson-Hopson C."/>
            <person name="Hsuan V.W."/>
            <person name="Iida K."/>
            <person name="Karnes M."/>
            <person name="Khan S."/>
            <person name="Koesema E."/>
            <person name="Ishida J."/>
            <person name="Jiang P.X."/>
            <person name="Jones T."/>
            <person name="Kawai J."/>
            <person name="Kamiya A."/>
            <person name="Meyers C."/>
            <person name="Nakajima M."/>
            <person name="Narusaka M."/>
            <person name="Seki M."/>
            <person name="Sakurai T."/>
            <person name="Satou M."/>
            <person name="Tamse R."/>
            <person name="Vaysberg M."/>
            <person name="Wallender E.K."/>
            <person name="Wong C."/>
            <person name="Yamamura Y."/>
            <person name="Yuan S."/>
            <person name="Shinozaki K."/>
            <person name="Davis R.W."/>
            <person name="Theologis A."/>
            <person name="Ecker J.R."/>
        </authorList>
    </citation>
    <scope>NUCLEOTIDE SEQUENCE [LARGE SCALE MRNA]</scope>
    <source>
        <strain>cv. Columbia</strain>
    </source>
</reference>
<reference key="4">
    <citation type="submission" date="2006-07" db="EMBL/GenBank/DDBJ databases">
        <title>Large-scale analysis of RIKEN Arabidopsis full-length (RAFL) cDNAs.</title>
        <authorList>
            <person name="Totoki Y."/>
            <person name="Seki M."/>
            <person name="Ishida J."/>
            <person name="Nakajima M."/>
            <person name="Enju A."/>
            <person name="Kamiya A."/>
            <person name="Narusaka M."/>
            <person name="Shin-i T."/>
            <person name="Nakagawa M."/>
            <person name="Sakamoto N."/>
            <person name="Oishi K."/>
            <person name="Kohara Y."/>
            <person name="Kobayashi M."/>
            <person name="Toyoda A."/>
            <person name="Sakaki Y."/>
            <person name="Sakurai T."/>
            <person name="Iida K."/>
            <person name="Akiyama K."/>
            <person name="Satou M."/>
            <person name="Toyoda T."/>
            <person name="Konagaya A."/>
            <person name="Carninci P."/>
            <person name="Kawai J."/>
            <person name="Hayashizaki Y."/>
            <person name="Shinozaki K."/>
        </authorList>
    </citation>
    <scope>NUCLEOTIDE SEQUENCE [LARGE SCALE MRNA]</scope>
    <source>
        <strain>cv. Columbia</strain>
    </source>
</reference>
<reference key="5">
    <citation type="submission" date="2002-03" db="EMBL/GenBank/DDBJ databases">
        <title>Full-length cDNA from Arabidopsis thaliana.</title>
        <authorList>
            <person name="Brover V.V."/>
            <person name="Troukhan M.E."/>
            <person name="Alexandrov N.A."/>
            <person name="Lu Y.-P."/>
            <person name="Flavell R.B."/>
            <person name="Feldmann K.A."/>
        </authorList>
    </citation>
    <scope>NUCLEOTIDE SEQUENCE [LARGE SCALE MRNA]</scope>
</reference>
<comment type="subunit">
    <text>May form oligomeric structures.</text>
</comment>
<comment type="interaction">
    <interactant intactId="EBI-4428388">
        <id>Q9FGM9</id>
    </interactant>
    <interactant intactId="EBI-2349513">
        <id>Q84MC7</id>
        <label>PYL9</label>
    </interactant>
    <organismsDiffer>false</organismsDiffer>
    <experiments>3</experiments>
</comment>
<comment type="subcellular location">
    <subcellularLocation>
        <location evidence="3">Mitochondrion</location>
    </subcellularLocation>
</comment>
<comment type="similarity">
    <text evidence="2">Belongs to the small heat shock protein (HSP20) family.</text>
</comment>
<name>HS235_ARATH</name>